<name>XPOT_BOTFB</name>
<feature type="chain" id="PRO_0000343085" description="Exportin-T">
    <location>
        <begin position="1"/>
        <end position="1023"/>
    </location>
</feature>
<accession>A6RVT8</accession>
<accession>A0A384JVE5</accession>
<evidence type="ECO:0000250" key="1"/>
<evidence type="ECO:0000305" key="2"/>
<organism>
    <name type="scientific">Botryotinia fuckeliana (strain B05.10)</name>
    <name type="common">Noble rot fungus</name>
    <name type="synonym">Botrytis cinerea</name>
    <dbReference type="NCBI Taxonomy" id="332648"/>
    <lineage>
        <taxon>Eukaryota</taxon>
        <taxon>Fungi</taxon>
        <taxon>Dikarya</taxon>
        <taxon>Ascomycota</taxon>
        <taxon>Pezizomycotina</taxon>
        <taxon>Leotiomycetes</taxon>
        <taxon>Helotiales</taxon>
        <taxon>Sclerotiniaceae</taxon>
        <taxon>Botrytis</taxon>
    </lineage>
</organism>
<reference key="1">
    <citation type="journal article" date="2011" name="PLoS Genet.">
        <title>Genomic analysis of the necrotrophic fungal pathogens Sclerotinia sclerotiorum and Botrytis cinerea.</title>
        <authorList>
            <person name="Amselem J."/>
            <person name="Cuomo C.A."/>
            <person name="van Kan J.A.L."/>
            <person name="Viaud M."/>
            <person name="Benito E.P."/>
            <person name="Couloux A."/>
            <person name="Coutinho P.M."/>
            <person name="de Vries R.P."/>
            <person name="Dyer P.S."/>
            <person name="Fillinger S."/>
            <person name="Fournier E."/>
            <person name="Gout L."/>
            <person name="Hahn M."/>
            <person name="Kohn L."/>
            <person name="Lapalu N."/>
            <person name="Plummer K.M."/>
            <person name="Pradier J.-M."/>
            <person name="Quevillon E."/>
            <person name="Sharon A."/>
            <person name="Simon A."/>
            <person name="ten Have A."/>
            <person name="Tudzynski B."/>
            <person name="Tudzynski P."/>
            <person name="Wincker P."/>
            <person name="Andrew M."/>
            <person name="Anthouard V."/>
            <person name="Beever R.E."/>
            <person name="Beffa R."/>
            <person name="Benoit I."/>
            <person name="Bouzid O."/>
            <person name="Brault B."/>
            <person name="Chen Z."/>
            <person name="Choquer M."/>
            <person name="Collemare J."/>
            <person name="Cotton P."/>
            <person name="Danchin E.G."/>
            <person name="Da Silva C."/>
            <person name="Gautier A."/>
            <person name="Giraud C."/>
            <person name="Giraud T."/>
            <person name="Gonzalez C."/>
            <person name="Grossetete S."/>
            <person name="Gueldener U."/>
            <person name="Henrissat B."/>
            <person name="Howlett B.J."/>
            <person name="Kodira C."/>
            <person name="Kretschmer M."/>
            <person name="Lappartient A."/>
            <person name="Leroch M."/>
            <person name="Levis C."/>
            <person name="Mauceli E."/>
            <person name="Neuveglise C."/>
            <person name="Oeser B."/>
            <person name="Pearson M."/>
            <person name="Poulain J."/>
            <person name="Poussereau N."/>
            <person name="Quesneville H."/>
            <person name="Rascle C."/>
            <person name="Schumacher J."/>
            <person name="Segurens B."/>
            <person name="Sexton A."/>
            <person name="Silva E."/>
            <person name="Sirven C."/>
            <person name="Soanes D.M."/>
            <person name="Talbot N.J."/>
            <person name="Templeton M."/>
            <person name="Yandava C."/>
            <person name="Yarden O."/>
            <person name="Zeng Q."/>
            <person name="Rollins J.A."/>
            <person name="Lebrun M.-H."/>
            <person name="Dickman M."/>
        </authorList>
    </citation>
    <scope>NUCLEOTIDE SEQUENCE [LARGE SCALE GENOMIC DNA]</scope>
    <source>
        <strain>B05.10</strain>
    </source>
</reference>
<reference key="2">
    <citation type="journal article" date="2012" name="Eukaryot. Cell">
        <title>Genome update of Botrytis cinerea strains B05.10 and T4.</title>
        <authorList>
            <person name="Staats M."/>
            <person name="van Kan J.A.L."/>
        </authorList>
    </citation>
    <scope>NUCLEOTIDE SEQUENCE [LARGE SCALE GENOMIC DNA]</scope>
    <scope>GENOME REANNOTATION</scope>
    <source>
        <strain>B05.10</strain>
    </source>
</reference>
<reference key="3">
    <citation type="journal article" date="2017" name="Mol. Plant Pathol.">
        <title>A gapless genome sequence of the fungus Botrytis cinerea.</title>
        <authorList>
            <person name="van Kan J.A.L."/>
            <person name="Stassen J.H.M."/>
            <person name="Mosbach A."/>
            <person name="van der Lee T.A.J."/>
            <person name="Faino L."/>
            <person name="Farmer A.D."/>
            <person name="Papasotiriou D.G."/>
            <person name="Zhou S."/>
            <person name="Seidl M.F."/>
            <person name="Cottam E."/>
            <person name="Edel D."/>
            <person name="Hahn M."/>
            <person name="Schwartz D.C."/>
            <person name="Dietrich R.A."/>
            <person name="Widdison S."/>
            <person name="Scalliet G."/>
        </authorList>
    </citation>
    <scope>NUCLEOTIDE SEQUENCE [LARGE SCALE GENOMIC DNA]</scope>
    <scope>GENOME REANNOTATION</scope>
    <source>
        <strain>B05.10</strain>
    </source>
</reference>
<proteinExistence type="inferred from homology"/>
<keyword id="KW-0963">Cytoplasm</keyword>
<keyword id="KW-0539">Nucleus</keyword>
<keyword id="KW-1185">Reference proteome</keyword>
<keyword id="KW-0694">RNA-binding</keyword>
<keyword id="KW-0813">Transport</keyword>
<keyword id="KW-0819">tRNA processing</keyword>
<keyword id="KW-0820">tRNA-binding</keyword>
<sequence length="1023" mass="114236">MDAQIEKAIEIAWDPRSDPNLKEQAVQYLTQVRGDTSSLQACLNLFTRAPKAAEVVRLVSLDIVNNAIQTQHIDDQSLRGLKEQLHDYVRRTYASGNEVDPPALQNKLTQTLTFLFSSLYKEGWESFIRDFLSFAGHQNGSVDNLSGVVLYLRLLSSIHDEIADLMIARAGEETKRNVELKDLVRARDVHTVAASFQQILTYWQGNNDAIVEMTLKVIGKWVSWIDISLVVNQDILNLLFPLVGRNPNGGEDKVKDAAIDCFTEIVAKKMKPSDKIGMILFLNLGEVVSQLISSPALHDLRNTSSYDTDLAEAVAKLVNNVVSDLVKILEDAKVEPDVRAQAEQLLQTFLPLLLRFFSDEYDEICATVIPSLTELNTFLRKAQPLPPAYSAMLTPILNAIIQKMRYDDTSSYADEDELTDEAEFQELRKRLQVLQKTIAAVDEALYVDVLSNVIGSTFQRLDEQNGQIDWRDLDLALHEMYLFGELTLVNGGLYAKSQPSSIAAERLIVMMSKMVESGIASFNHPAISLQYMEICVRYCSFFENQTQYIPQVLEQFVSFVHHSHSRVRIRSWYLFHRFVKHLRGQVGNVAETIIQSISDLLPLKAEVPRENDDDMSSDDGNHDAADVAFNAQLNLYEAIGCISSTTSTPIEKQAIYARTIMDPLFSDIERNLEQAKSGNAQATLQIHHIIFALGSLAHGFSDWSPGEGKRAGQAPVKEITIEFSRAAEAILFALEALKASFEVRNAARSSFSRLMGVMGVAMLPLLPRWIDGLLSQSSSKEEIAMFLRLLDQVVFGFKKDIHEVLNSLLTPLFQRVFASLSEPVTGTDDGIQLAELRREYLTFVTVILNNELGSVLVSEQNQAFFDPLIQSVTSLAKTVTNENGNLAASKIAFNVMTKMAEIWGGPTIATPGQPITSPVPSQPTFPGFDSFLIERFHPVCWEVLRDPNFRPLVDAQSKSVLNELAGLEQAIYMKTGNMFVEHLQGNFFPSMGVDGSGFIKSMVESPERKGLATFLQNWMKGKA</sequence>
<gene>
    <name type="primary">los1</name>
    <name type="ORF">BC1G_04725</name>
    <name type="ORF">BCIN_10g02430</name>
</gene>
<comment type="function">
    <text evidence="1">tRNA nucleus export receptor which facilitates tRNA translocation across the nuclear pore complex. Involved in pre-tRNA splicing, probably by affecting the interaction of pre-tRNA with splicing endonuclease (By similarity).</text>
</comment>
<comment type="subcellular location">
    <subcellularLocation>
        <location evidence="1">Nucleus</location>
    </subcellularLocation>
    <subcellularLocation>
        <location evidence="1">Cytoplasm</location>
    </subcellularLocation>
    <text evidence="1">Shuttles between the nucleus and the cytoplasm.</text>
</comment>
<comment type="similarity">
    <text evidence="2">Belongs to the exportin family.</text>
</comment>
<protein>
    <recommendedName>
        <fullName>Exportin-T</fullName>
    </recommendedName>
    <alternativeName>
        <fullName>Exportin(tRNA)</fullName>
    </alternativeName>
    <alternativeName>
        <fullName>Karyopherin-beta</fullName>
    </alternativeName>
    <alternativeName>
        <fullName>tRNA exportin</fullName>
    </alternativeName>
</protein>
<dbReference type="EMBL" id="CP009814">
    <property type="protein sequence ID" value="ATZ54227.1"/>
    <property type="molecule type" value="Genomic_DNA"/>
</dbReference>
<dbReference type="SMR" id="A6RVT8"/>
<dbReference type="EnsemblFungi" id="Bcin10g02430.1">
    <property type="protein sequence ID" value="Bcin10p02430.1"/>
    <property type="gene ID" value="Bcin10g02430"/>
</dbReference>
<dbReference type="VEuPathDB" id="FungiDB:Bcin10g02430"/>
<dbReference type="OrthoDB" id="26399at2759"/>
<dbReference type="Proteomes" id="UP000001798">
    <property type="component" value="Chromosome bcin10"/>
</dbReference>
<dbReference type="GO" id="GO:0005737">
    <property type="term" value="C:cytoplasm"/>
    <property type="evidence" value="ECO:0007669"/>
    <property type="project" value="UniProtKB-SubCell"/>
</dbReference>
<dbReference type="GO" id="GO:0016363">
    <property type="term" value="C:nuclear matrix"/>
    <property type="evidence" value="ECO:0007669"/>
    <property type="project" value="TreeGrafter"/>
</dbReference>
<dbReference type="GO" id="GO:0005643">
    <property type="term" value="C:nuclear pore"/>
    <property type="evidence" value="ECO:0007669"/>
    <property type="project" value="TreeGrafter"/>
</dbReference>
<dbReference type="GO" id="GO:0031267">
    <property type="term" value="F:small GTPase binding"/>
    <property type="evidence" value="ECO:0007669"/>
    <property type="project" value="InterPro"/>
</dbReference>
<dbReference type="GO" id="GO:0000049">
    <property type="term" value="F:tRNA binding"/>
    <property type="evidence" value="ECO:0007669"/>
    <property type="project" value="UniProtKB-KW"/>
</dbReference>
<dbReference type="GO" id="GO:0008033">
    <property type="term" value="P:tRNA processing"/>
    <property type="evidence" value="ECO:0007669"/>
    <property type="project" value="UniProtKB-KW"/>
</dbReference>
<dbReference type="GO" id="GO:0071528">
    <property type="term" value="P:tRNA re-export from nucleus"/>
    <property type="evidence" value="ECO:0007669"/>
    <property type="project" value="InterPro"/>
</dbReference>
<dbReference type="FunFam" id="1.25.10.10:FF:000355">
    <property type="entry name" value="Exportin-T"/>
    <property type="match status" value="1"/>
</dbReference>
<dbReference type="Gene3D" id="1.25.10.10">
    <property type="entry name" value="Leucine-rich Repeat Variant"/>
    <property type="match status" value="1"/>
</dbReference>
<dbReference type="InterPro" id="IPR011989">
    <property type="entry name" value="ARM-like"/>
</dbReference>
<dbReference type="InterPro" id="IPR016024">
    <property type="entry name" value="ARM-type_fold"/>
</dbReference>
<dbReference type="InterPro" id="IPR013598">
    <property type="entry name" value="Exportin-1/Importin-b-like"/>
</dbReference>
<dbReference type="InterPro" id="IPR045546">
    <property type="entry name" value="Exportin-T_C"/>
</dbReference>
<dbReference type="InterPro" id="IPR040017">
    <property type="entry name" value="XPOT"/>
</dbReference>
<dbReference type="PANTHER" id="PTHR15952:SF11">
    <property type="entry name" value="EXPORTIN-T"/>
    <property type="match status" value="1"/>
</dbReference>
<dbReference type="PANTHER" id="PTHR15952">
    <property type="entry name" value="EXPORTIN-T/LOS1"/>
    <property type="match status" value="1"/>
</dbReference>
<dbReference type="Pfam" id="PF19282">
    <property type="entry name" value="Exportin-T"/>
    <property type="match status" value="1"/>
</dbReference>
<dbReference type="Pfam" id="PF08389">
    <property type="entry name" value="Xpo1"/>
    <property type="match status" value="1"/>
</dbReference>
<dbReference type="SUPFAM" id="SSF48371">
    <property type="entry name" value="ARM repeat"/>
    <property type="match status" value="1"/>
</dbReference>